<reference key="1">
    <citation type="journal article" date="2011" name="PLoS ONE">
        <title>The genome of Akkermansia muciniphila, a dedicated intestinal mucin degrader, and its use in exploring intestinal metagenomes.</title>
        <authorList>
            <person name="van Passel M.W."/>
            <person name="Kant R."/>
            <person name="Zoetendal E.G."/>
            <person name="Plugge C.M."/>
            <person name="Derrien M."/>
            <person name="Malfatti S.A."/>
            <person name="Chain P.S."/>
            <person name="Woyke T."/>
            <person name="Palva A."/>
            <person name="de Vos W.M."/>
            <person name="Smidt H."/>
        </authorList>
    </citation>
    <scope>NUCLEOTIDE SEQUENCE [LARGE SCALE GENOMIC DNA]</scope>
    <source>
        <strain>ATCC BAA-835 / DSM 22959 / JCM 33894 / BCRC 81048 / CCUG 64013 / CIP 107961 / Muc</strain>
    </source>
</reference>
<dbReference type="EC" id="1.1.1.37" evidence="1"/>
<dbReference type="EMBL" id="CP001071">
    <property type="protein sequence ID" value="ACD05258.1"/>
    <property type="molecule type" value="Genomic_DNA"/>
</dbReference>
<dbReference type="RefSeq" id="WP_012420473.1">
    <property type="nucleotide sequence ID" value="NZ_CP071807.1"/>
</dbReference>
<dbReference type="SMR" id="B2UKY5"/>
<dbReference type="STRING" id="349741.Amuc_1436"/>
<dbReference type="PaxDb" id="349741-Amuc_1436"/>
<dbReference type="KEGG" id="amu:Amuc_1436"/>
<dbReference type="eggNOG" id="COG0039">
    <property type="taxonomic scope" value="Bacteria"/>
</dbReference>
<dbReference type="HOGENOM" id="CLU_040727_2_0_0"/>
<dbReference type="OrthoDB" id="9802969at2"/>
<dbReference type="BioCyc" id="AMUC349741:G1GBX-1534-MONOMER"/>
<dbReference type="Proteomes" id="UP000001031">
    <property type="component" value="Chromosome"/>
</dbReference>
<dbReference type="GO" id="GO:0030060">
    <property type="term" value="F:L-malate dehydrogenase (NAD+) activity"/>
    <property type="evidence" value="ECO:0007669"/>
    <property type="project" value="UniProtKB-UniRule"/>
</dbReference>
<dbReference type="GO" id="GO:0006108">
    <property type="term" value="P:malate metabolic process"/>
    <property type="evidence" value="ECO:0007669"/>
    <property type="project" value="InterPro"/>
</dbReference>
<dbReference type="GO" id="GO:0006099">
    <property type="term" value="P:tricarboxylic acid cycle"/>
    <property type="evidence" value="ECO:0007669"/>
    <property type="project" value="UniProtKB-UniRule"/>
</dbReference>
<dbReference type="CDD" id="cd01338">
    <property type="entry name" value="MDH_chloroplast-like"/>
    <property type="match status" value="1"/>
</dbReference>
<dbReference type="FunFam" id="3.40.50.720:FF:000010">
    <property type="entry name" value="Malate dehydrogenase"/>
    <property type="match status" value="1"/>
</dbReference>
<dbReference type="FunFam" id="3.90.110.10:FF:000002">
    <property type="entry name" value="Malate dehydrogenase"/>
    <property type="match status" value="1"/>
</dbReference>
<dbReference type="Gene3D" id="3.90.110.10">
    <property type="entry name" value="Lactate dehydrogenase/glycoside hydrolase, family 4, C-terminal"/>
    <property type="match status" value="1"/>
</dbReference>
<dbReference type="Gene3D" id="3.40.50.720">
    <property type="entry name" value="NAD(P)-binding Rossmann-like Domain"/>
    <property type="match status" value="1"/>
</dbReference>
<dbReference type="HAMAP" id="MF_01517">
    <property type="entry name" value="Malate_dehydrog_2"/>
    <property type="match status" value="1"/>
</dbReference>
<dbReference type="InterPro" id="IPR001557">
    <property type="entry name" value="L-lactate/malate_DH"/>
</dbReference>
<dbReference type="InterPro" id="IPR022383">
    <property type="entry name" value="Lactate/malate_DH_C"/>
</dbReference>
<dbReference type="InterPro" id="IPR001236">
    <property type="entry name" value="Lactate/malate_DH_N"/>
</dbReference>
<dbReference type="InterPro" id="IPR015955">
    <property type="entry name" value="Lactate_DH/Glyco_Ohase_4_C"/>
</dbReference>
<dbReference type="InterPro" id="IPR001252">
    <property type="entry name" value="Malate_DH_AS"/>
</dbReference>
<dbReference type="InterPro" id="IPR010945">
    <property type="entry name" value="Malate_DH_type2"/>
</dbReference>
<dbReference type="InterPro" id="IPR036291">
    <property type="entry name" value="NAD(P)-bd_dom_sf"/>
</dbReference>
<dbReference type="NCBIfam" id="TIGR01759">
    <property type="entry name" value="MalateDH-SF1"/>
    <property type="match status" value="1"/>
</dbReference>
<dbReference type="NCBIfam" id="NF003916">
    <property type="entry name" value="PRK05442.1"/>
    <property type="match status" value="1"/>
</dbReference>
<dbReference type="PANTHER" id="PTHR23382">
    <property type="entry name" value="MALATE DEHYDROGENASE"/>
    <property type="match status" value="1"/>
</dbReference>
<dbReference type="Pfam" id="PF02866">
    <property type="entry name" value="Ldh_1_C"/>
    <property type="match status" value="1"/>
</dbReference>
<dbReference type="Pfam" id="PF00056">
    <property type="entry name" value="Ldh_1_N"/>
    <property type="match status" value="1"/>
</dbReference>
<dbReference type="PIRSF" id="PIRSF000102">
    <property type="entry name" value="Lac_mal_DH"/>
    <property type="match status" value="1"/>
</dbReference>
<dbReference type="SUPFAM" id="SSF56327">
    <property type="entry name" value="LDH C-terminal domain-like"/>
    <property type="match status" value="1"/>
</dbReference>
<dbReference type="SUPFAM" id="SSF51735">
    <property type="entry name" value="NAD(P)-binding Rossmann-fold domains"/>
    <property type="match status" value="1"/>
</dbReference>
<dbReference type="PROSITE" id="PS00068">
    <property type="entry name" value="MDH"/>
    <property type="match status" value="1"/>
</dbReference>
<protein>
    <recommendedName>
        <fullName evidence="1">Malate dehydrogenase</fullName>
        <ecNumber evidence="1">1.1.1.37</ecNumber>
    </recommendedName>
</protein>
<evidence type="ECO:0000255" key="1">
    <source>
        <dbReference type="HAMAP-Rule" id="MF_01517"/>
    </source>
</evidence>
<keyword id="KW-0520">NAD</keyword>
<keyword id="KW-0560">Oxidoreductase</keyword>
<keyword id="KW-1185">Reference proteome</keyword>
<keyword id="KW-0816">Tricarboxylic acid cycle</keyword>
<comment type="function">
    <text evidence="1">Catalyzes the reversible oxidation of malate to oxaloacetate.</text>
</comment>
<comment type="catalytic activity">
    <reaction evidence="1">
        <text>(S)-malate + NAD(+) = oxaloacetate + NADH + H(+)</text>
        <dbReference type="Rhea" id="RHEA:21432"/>
        <dbReference type="ChEBI" id="CHEBI:15378"/>
        <dbReference type="ChEBI" id="CHEBI:15589"/>
        <dbReference type="ChEBI" id="CHEBI:16452"/>
        <dbReference type="ChEBI" id="CHEBI:57540"/>
        <dbReference type="ChEBI" id="CHEBI:57945"/>
        <dbReference type="EC" id="1.1.1.37"/>
    </reaction>
</comment>
<comment type="similarity">
    <text evidence="1">Belongs to the LDH/MDH superfamily. MDH type 2 family.</text>
</comment>
<proteinExistence type="inferred from homology"/>
<name>MDH_AKKM8</name>
<organism>
    <name type="scientific">Akkermansia muciniphila (strain ATCC BAA-835 / DSM 22959 / JCM 33894 / BCRC 81048 / CCUG 64013 / CIP 107961 / Muc)</name>
    <dbReference type="NCBI Taxonomy" id="349741"/>
    <lineage>
        <taxon>Bacteria</taxon>
        <taxon>Pseudomonadati</taxon>
        <taxon>Verrucomicrobiota</taxon>
        <taxon>Verrucomicrobiia</taxon>
        <taxon>Verrucomicrobiales</taxon>
        <taxon>Akkermansiaceae</taxon>
        <taxon>Akkermansia</taxon>
    </lineage>
</organism>
<accession>B2UKY5</accession>
<feature type="chain" id="PRO_1000191608" description="Malate dehydrogenase">
    <location>
        <begin position="1"/>
        <end position="329"/>
    </location>
</feature>
<feature type="active site" description="Proton acceptor" evidence="1">
    <location>
        <position position="187"/>
    </location>
</feature>
<feature type="binding site" evidence="1">
    <location>
        <begin position="11"/>
        <end position="17"/>
    </location>
    <ligand>
        <name>NAD(+)</name>
        <dbReference type="ChEBI" id="CHEBI:57540"/>
    </ligand>
</feature>
<feature type="binding site" evidence="1">
    <location>
        <position position="92"/>
    </location>
    <ligand>
        <name>substrate</name>
    </ligand>
</feature>
<feature type="binding site" evidence="1">
    <location>
        <position position="98"/>
    </location>
    <ligand>
        <name>substrate</name>
    </ligand>
</feature>
<feature type="binding site" evidence="1">
    <location>
        <position position="105"/>
    </location>
    <ligand>
        <name>NAD(+)</name>
        <dbReference type="ChEBI" id="CHEBI:57540"/>
    </ligand>
</feature>
<feature type="binding site" evidence="1">
    <location>
        <position position="112"/>
    </location>
    <ligand>
        <name>NAD(+)</name>
        <dbReference type="ChEBI" id="CHEBI:57540"/>
    </ligand>
</feature>
<feature type="binding site" evidence="1">
    <location>
        <begin position="129"/>
        <end position="131"/>
    </location>
    <ligand>
        <name>NAD(+)</name>
        <dbReference type="ChEBI" id="CHEBI:57540"/>
    </ligand>
</feature>
<feature type="binding site" evidence="1">
    <location>
        <position position="131"/>
    </location>
    <ligand>
        <name>substrate</name>
    </ligand>
</feature>
<feature type="binding site" evidence="1">
    <location>
        <position position="162"/>
    </location>
    <ligand>
        <name>substrate</name>
    </ligand>
</feature>
<sequence>MKTPITVTVTGAAGQIAYSLLFRIASGSMLGPDQPINLRLLEIPPAMNALEGVVMELRDAAFPLVNEIVPTSDPDEAFAGANWCLLVGSVPRKAGMERKDLLDINGKVFIGQGQAIARSAAKDVRVLVVGNPCNTNALIAMHNASGVPSDRFFAMTRLDENRAKSQLAEKAGVHVTEVTNMAIWGNHSSTQYPDFTNARIGGKPVTEVIKDTEWLKGDFITTVQQRGAAIIKARGASSAASAASAAVDTVRSLATQTPEGDWYSVAVCSDGSYGIEKGLICSFPVRTTKDGGWEIVQGLPVDAFSREKIDATVNELKEERDAVSSLLKH</sequence>
<gene>
    <name evidence="1" type="primary">mdh</name>
    <name type="ordered locus">Amuc_1436</name>
</gene>